<comment type="function">
    <text evidence="1">Tetrapolymerization of the monopyrrole PBG into the hydroxymethylbilane pre-uroporphyrinogen in several discrete steps.</text>
</comment>
<comment type="catalytic activity">
    <reaction evidence="1">
        <text>4 porphobilinogen + H2O = hydroxymethylbilane + 4 NH4(+)</text>
        <dbReference type="Rhea" id="RHEA:13185"/>
        <dbReference type="ChEBI" id="CHEBI:15377"/>
        <dbReference type="ChEBI" id="CHEBI:28938"/>
        <dbReference type="ChEBI" id="CHEBI:57845"/>
        <dbReference type="ChEBI" id="CHEBI:58126"/>
        <dbReference type="EC" id="2.5.1.61"/>
    </reaction>
</comment>
<comment type="cofactor">
    <cofactor evidence="1">
        <name>dipyrromethane</name>
        <dbReference type="ChEBI" id="CHEBI:60342"/>
    </cofactor>
    <text evidence="1">Binds 1 dipyrromethane group covalently.</text>
</comment>
<comment type="pathway">
    <text evidence="1">Porphyrin-containing compound metabolism; protoporphyrin-IX biosynthesis; coproporphyrinogen-III from 5-aminolevulinate: step 2/4.</text>
</comment>
<comment type="pathway">
    <text evidence="1">Porphyrin-containing compound metabolism; chlorophyll biosynthesis.</text>
</comment>
<comment type="subunit">
    <text evidence="1">Monomer.</text>
</comment>
<comment type="miscellaneous">
    <text evidence="1">The porphobilinogen subunits are added to the dipyrromethane group.</text>
</comment>
<comment type="similarity">
    <text evidence="1">Belongs to the HMBS family.</text>
</comment>
<dbReference type="EC" id="2.5.1.61" evidence="1"/>
<dbReference type="EMBL" id="CP000804">
    <property type="protein sequence ID" value="ABU58118.1"/>
    <property type="molecule type" value="Genomic_DNA"/>
</dbReference>
<dbReference type="RefSeq" id="WP_012120542.1">
    <property type="nucleotide sequence ID" value="NC_009767.1"/>
</dbReference>
<dbReference type="SMR" id="A7NKU8"/>
<dbReference type="STRING" id="383372.Rcas_2030"/>
<dbReference type="KEGG" id="rca:Rcas_2030"/>
<dbReference type="eggNOG" id="COG0181">
    <property type="taxonomic scope" value="Bacteria"/>
</dbReference>
<dbReference type="HOGENOM" id="CLU_019704_0_2_0"/>
<dbReference type="OrthoDB" id="9810298at2"/>
<dbReference type="UniPathway" id="UPA00251">
    <property type="reaction ID" value="UER00319"/>
</dbReference>
<dbReference type="UniPathway" id="UPA00668"/>
<dbReference type="Proteomes" id="UP000000263">
    <property type="component" value="Chromosome"/>
</dbReference>
<dbReference type="GO" id="GO:0005737">
    <property type="term" value="C:cytoplasm"/>
    <property type="evidence" value="ECO:0007669"/>
    <property type="project" value="TreeGrafter"/>
</dbReference>
<dbReference type="GO" id="GO:0004418">
    <property type="term" value="F:hydroxymethylbilane synthase activity"/>
    <property type="evidence" value="ECO:0007669"/>
    <property type="project" value="UniProtKB-UniRule"/>
</dbReference>
<dbReference type="GO" id="GO:0015995">
    <property type="term" value="P:chlorophyll biosynthetic process"/>
    <property type="evidence" value="ECO:0007669"/>
    <property type="project" value="UniProtKB-UniRule"/>
</dbReference>
<dbReference type="GO" id="GO:0006782">
    <property type="term" value="P:protoporphyrinogen IX biosynthetic process"/>
    <property type="evidence" value="ECO:0007669"/>
    <property type="project" value="UniProtKB-UniRule"/>
</dbReference>
<dbReference type="CDD" id="cd13646">
    <property type="entry name" value="PBP2_EcHMBS_like"/>
    <property type="match status" value="1"/>
</dbReference>
<dbReference type="FunFam" id="3.40.190.10:FF:000004">
    <property type="entry name" value="Porphobilinogen deaminase"/>
    <property type="match status" value="1"/>
</dbReference>
<dbReference type="FunFam" id="3.40.190.10:FF:000005">
    <property type="entry name" value="Porphobilinogen deaminase"/>
    <property type="match status" value="1"/>
</dbReference>
<dbReference type="Gene3D" id="3.40.190.10">
    <property type="entry name" value="Periplasmic binding protein-like II"/>
    <property type="match status" value="2"/>
</dbReference>
<dbReference type="Gene3D" id="3.30.160.40">
    <property type="entry name" value="Porphobilinogen deaminase, C-terminal domain"/>
    <property type="match status" value="1"/>
</dbReference>
<dbReference type="HAMAP" id="MF_00260">
    <property type="entry name" value="Porphobil_deam"/>
    <property type="match status" value="1"/>
</dbReference>
<dbReference type="InterPro" id="IPR000860">
    <property type="entry name" value="HemC"/>
</dbReference>
<dbReference type="InterPro" id="IPR022419">
    <property type="entry name" value="Porphobilin_deaminase_cofac_BS"/>
</dbReference>
<dbReference type="InterPro" id="IPR022417">
    <property type="entry name" value="Porphobilin_deaminase_N"/>
</dbReference>
<dbReference type="InterPro" id="IPR022418">
    <property type="entry name" value="Porphobilinogen_deaminase_C"/>
</dbReference>
<dbReference type="InterPro" id="IPR036803">
    <property type="entry name" value="Porphobilinogen_deaminase_C_sf"/>
</dbReference>
<dbReference type="NCBIfam" id="TIGR00212">
    <property type="entry name" value="hemC"/>
    <property type="match status" value="1"/>
</dbReference>
<dbReference type="PANTHER" id="PTHR11557">
    <property type="entry name" value="PORPHOBILINOGEN DEAMINASE"/>
    <property type="match status" value="1"/>
</dbReference>
<dbReference type="PANTHER" id="PTHR11557:SF0">
    <property type="entry name" value="PORPHOBILINOGEN DEAMINASE"/>
    <property type="match status" value="1"/>
</dbReference>
<dbReference type="Pfam" id="PF01379">
    <property type="entry name" value="Porphobil_deam"/>
    <property type="match status" value="1"/>
</dbReference>
<dbReference type="Pfam" id="PF03900">
    <property type="entry name" value="Porphobil_deamC"/>
    <property type="match status" value="1"/>
</dbReference>
<dbReference type="PIRSF" id="PIRSF001438">
    <property type="entry name" value="4pyrrol_synth_OHMeBilane_synth"/>
    <property type="match status" value="1"/>
</dbReference>
<dbReference type="PRINTS" id="PR00151">
    <property type="entry name" value="PORPHBDMNASE"/>
</dbReference>
<dbReference type="SUPFAM" id="SSF53850">
    <property type="entry name" value="Periplasmic binding protein-like II"/>
    <property type="match status" value="1"/>
</dbReference>
<dbReference type="SUPFAM" id="SSF54782">
    <property type="entry name" value="Porphobilinogen deaminase (hydroxymethylbilane synthase), C-terminal domain"/>
    <property type="match status" value="1"/>
</dbReference>
<dbReference type="PROSITE" id="PS00533">
    <property type="entry name" value="PORPHOBILINOGEN_DEAM"/>
    <property type="match status" value="1"/>
</dbReference>
<accession>A7NKU8</accession>
<protein>
    <recommendedName>
        <fullName evidence="1">Porphobilinogen deaminase</fullName>
        <shortName evidence="1">PBG</shortName>
        <ecNumber evidence="1">2.5.1.61</ecNumber>
    </recommendedName>
    <alternativeName>
        <fullName evidence="1">Hydroxymethylbilane synthase</fullName>
        <shortName evidence="1">HMBS</shortName>
    </alternativeName>
    <alternativeName>
        <fullName evidence="1">Pre-uroporphyrinogen synthase</fullName>
    </alternativeName>
</protein>
<feature type="chain" id="PRO_1000078619" description="Porphobilinogen deaminase">
    <location>
        <begin position="1"/>
        <end position="303"/>
    </location>
</feature>
<feature type="modified residue" description="S-(dipyrrolylmethanemethyl)cysteine" evidence="1">
    <location>
        <position position="241"/>
    </location>
</feature>
<keyword id="KW-0149">Chlorophyll biosynthesis</keyword>
<keyword id="KW-0627">Porphyrin biosynthesis</keyword>
<keyword id="KW-1185">Reference proteome</keyword>
<keyword id="KW-0808">Transferase</keyword>
<organism>
    <name type="scientific">Roseiflexus castenholzii (strain DSM 13941 / HLO8)</name>
    <dbReference type="NCBI Taxonomy" id="383372"/>
    <lineage>
        <taxon>Bacteria</taxon>
        <taxon>Bacillati</taxon>
        <taxon>Chloroflexota</taxon>
        <taxon>Chloroflexia</taxon>
        <taxon>Chloroflexales</taxon>
        <taxon>Roseiflexineae</taxon>
        <taxon>Roseiflexaceae</taxon>
        <taxon>Roseiflexus</taxon>
    </lineage>
</organism>
<sequence length="303" mass="31815">MRNSLTIGTRASKLALVQTHMIRDALQAAHPGLTVAVERITTRGDIILDRPLNAIGDKGLFVVEIEEAMRAGRVDLAVHSAKDLPSTLPPDMTLAVCPRRADPRDALVAQPGMTLASLPHGARVGTSSLRRACQLRALRPDLTLLDLRGNVDTRLRKLREGQYDAIVLAAAGLKRLGLEEVITELLEPDVLIPAVGQGIIGVEARAGDDEVLRLLAPLDDPAARAAITAERAFLARIGGGCRVPVGALALLEGDELLLYGMIGALDGRMVRGMRSGSASDPAGLGSALAEELLDAGGQALLAG</sequence>
<name>HEM3_ROSCS</name>
<evidence type="ECO:0000255" key="1">
    <source>
        <dbReference type="HAMAP-Rule" id="MF_00260"/>
    </source>
</evidence>
<proteinExistence type="inferred from homology"/>
<gene>
    <name evidence="1" type="primary">hemC</name>
    <name type="ordered locus">Rcas_2030</name>
</gene>
<reference key="1">
    <citation type="submission" date="2007-08" db="EMBL/GenBank/DDBJ databases">
        <title>Complete sequence of Roseiflexus castenholzii DSM 13941.</title>
        <authorList>
            <consortium name="US DOE Joint Genome Institute"/>
            <person name="Copeland A."/>
            <person name="Lucas S."/>
            <person name="Lapidus A."/>
            <person name="Barry K."/>
            <person name="Glavina del Rio T."/>
            <person name="Dalin E."/>
            <person name="Tice H."/>
            <person name="Pitluck S."/>
            <person name="Thompson L.S."/>
            <person name="Brettin T."/>
            <person name="Bruce D."/>
            <person name="Detter J.C."/>
            <person name="Han C."/>
            <person name="Tapia R."/>
            <person name="Schmutz J."/>
            <person name="Larimer F."/>
            <person name="Land M."/>
            <person name="Hauser L."/>
            <person name="Kyrpides N."/>
            <person name="Mikhailova N."/>
            <person name="Bryant D.A."/>
            <person name="Hanada S."/>
            <person name="Tsukatani Y."/>
            <person name="Richardson P."/>
        </authorList>
    </citation>
    <scope>NUCLEOTIDE SEQUENCE [LARGE SCALE GENOMIC DNA]</scope>
    <source>
        <strain>DSM 13941 / HLO8</strain>
    </source>
</reference>